<organismHost>
    <name type="scientific">Escherichia coli</name>
    <dbReference type="NCBI Taxonomy" id="562"/>
</organismHost>
<feature type="chain" id="PRO_0000165191" description="Uncharacterized 14.8 kDa protein in frd-Gp32 intergenic region">
    <location>
        <begin position="1"/>
        <end position="128"/>
    </location>
</feature>
<accession>Q76VH1</accession>
<protein>
    <recommendedName>
        <fullName>Uncharacterized 14.8 kDa protein in frd-Gp32 intergenic region</fullName>
    </recommendedName>
</protein>
<organism>
    <name type="scientific">Enterobacteria phage LZ1</name>
    <name type="common">Bacteriophage LZ1</name>
    <dbReference type="NCBI Taxonomy" id="42175"/>
    <lineage>
        <taxon>Viruses</taxon>
        <taxon>Duplodnaviria</taxon>
        <taxon>Heunggongvirae</taxon>
        <taxon>Uroviricota</taxon>
        <taxon>Caudoviricetes</taxon>
        <taxon>Straboviridae</taxon>
        <taxon>Tevenvirinae</taxon>
        <taxon>Tequatrovirus</taxon>
    </lineage>
</organism>
<reference key="1">
    <citation type="submission" date="1995-10" db="EMBL/GenBank/DDBJ databases">
        <title>DNA sequences of the frd region in T4-related bacteriophages.</title>
        <authorList>
            <person name="Poglazov A.B."/>
            <person name="Porter D."/>
            <person name="Kutter E.M."/>
            <person name="Mesyanzhinov V.V."/>
        </authorList>
    </citation>
    <scope>NUCLEOTIDE SEQUENCE [GENOMIC DNA]</scope>
</reference>
<dbReference type="EMBL" id="L46834">
    <property type="protein sequence ID" value="AAA74674.1"/>
    <property type="molecule type" value="Genomic_DNA"/>
</dbReference>
<dbReference type="SMR" id="Q76VH1"/>
<dbReference type="InterPro" id="IPR004885">
    <property type="entry name" value="FRD2"/>
</dbReference>
<dbReference type="Pfam" id="PF03197">
    <property type="entry name" value="FRD2"/>
    <property type="match status" value="1"/>
</dbReference>
<gene>
    <name type="primary">frd.2</name>
    <name type="synonym">frd2</name>
</gene>
<proteinExistence type="predicted"/>
<name>Y14D_BPLZ1</name>
<sequence length="128" mass="14872">MEIGKKYELNPHRIKSFIDISSSNANMVGIIQENGGWFEVKSILSLDGFDYVTEIICANGEIYNDDGMGDDYFELSEEEFYCFREYKEPTSEEDKVEDKVYDVTKIHCIVDENNVDEIIELLRKTFKA</sequence>